<evidence type="ECO:0000255" key="1">
    <source>
        <dbReference type="HAMAP-Rule" id="MF_01139"/>
    </source>
</evidence>
<feature type="chain" id="PRO_0000123666" description="Ditrans,polycis-undecaprenyl-diphosphate synthase ((2E,6E)-farnesyl-diphosphate specific)">
    <location>
        <begin position="1"/>
        <end position="252"/>
    </location>
</feature>
<feature type="active site" evidence="1">
    <location>
        <position position="25"/>
    </location>
</feature>
<feature type="active site" description="Proton acceptor" evidence="1">
    <location>
        <position position="73"/>
    </location>
</feature>
<feature type="binding site" evidence="1">
    <location>
        <position position="25"/>
    </location>
    <ligand>
        <name>Mg(2+)</name>
        <dbReference type="ChEBI" id="CHEBI:18420"/>
    </ligand>
</feature>
<feature type="binding site" evidence="1">
    <location>
        <begin position="26"/>
        <end position="29"/>
    </location>
    <ligand>
        <name>substrate</name>
    </ligand>
</feature>
<feature type="binding site" evidence="1">
    <location>
        <position position="30"/>
    </location>
    <ligand>
        <name>substrate</name>
    </ligand>
</feature>
<feature type="binding site" evidence="1">
    <location>
        <position position="38"/>
    </location>
    <ligand>
        <name>substrate</name>
    </ligand>
</feature>
<feature type="binding site" evidence="1">
    <location>
        <position position="42"/>
    </location>
    <ligand>
        <name>substrate</name>
    </ligand>
</feature>
<feature type="binding site" evidence="1">
    <location>
        <begin position="70"/>
        <end position="72"/>
    </location>
    <ligand>
        <name>substrate</name>
    </ligand>
</feature>
<feature type="binding site" evidence="1">
    <location>
        <position position="74"/>
    </location>
    <ligand>
        <name>substrate</name>
    </ligand>
</feature>
<feature type="binding site" evidence="1">
    <location>
        <position position="76"/>
    </location>
    <ligand>
        <name>substrate</name>
    </ligand>
</feature>
<feature type="binding site" evidence="1">
    <location>
        <position position="193"/>
    </location>
    <ligand>
        <name>substrate</name>
    </ligand>
</feature>
<feature type="binding site" evidence="1">
    <location>
        <position position="198"/>
    </location>
    <ligand>
        <name>Mg(2+)</name>
        <dbReference type="ChEBI" id="CHEBI:18420"/>
    </ligand>
</feature>
<feature type="binding site" evidence="1">
    <location>
        <begin position="199"/>
        <end position="201"/>
    </location>
    <ligand>
        <name>substrate</name>
    </ligand>
</feature>
<feature type="binding site" evidence="1">
    <location>
        <position position="212"/>
    </location>
    <ligand>
        <name>Mg(2+)</name>
        <dbReference type="ChEBI" id="CHEBI:18420"/>
    </ligand>
</feature>
<gene>
    <name evidence="1" type="primary">uppS</name>
    <name type="ordered locus">SPA0228</name>
</gene>
<reference key="1">
    <citation type="journal article" date="2004" name="Nat. Genet.">
        <title>Comparison of genome degradation in Paratyphi A and Typhi, human-restricted serovars of Salmonella enterica that cause typhoid.</title>
        <authorList>
            <person name="McClelland M."/>
            <person name="Sanderson K.E."/>
            <person name="Clifton S.W."/>
            <person name="Latreille P."/>
            <person name="Porwollik S."/>
            <person name="Sabo A."/>
            <person name="Meyer R."/>
            <person name="Bieri T."/>
            <person name="Ozersky P."/>
            <person name="McLellan M."/>
            <person name="Harkins C.R."/>
            <person name="Wang C."/>
            <person name="Nguyen C."/>
            <person name="Berghoff A."/>
            <person name="Elliott G."/>
            <person name="Kohlberg S."/>
            <person name="Strong C."/>
            <person name="Du F."/>
            <person name="Carter J."/>
            <person name="Kremizki C."/>
            <person name="Layman D."/>
            <person name="Leonard S."/>
            <person name="Sun H."/>
            <person name="Fulton L."/>
            <person name="Nash W."/>
            <person name="Miner T."/>
            <person name="Minx P."/>
            <person name="Delehaunty K."/>
            <person name="Fronick C."/>
            <person name="Magrini V."/>
            <person name="Nhan M."/>
            <person name="Warren W."/>
            <person name="Florea L."/>
            <person name="Spieth J."/>
            <person name="Wilson R.K."/>
        </authorList>
    </citation>
    <scope>NUCLEOTIDE SEQUENCE [LARGE SCALE GENOMIC DNA]</scope>
    <source>
        <strain>ATCC 9150 / SARB42</strain>
    </source>
</reference>
<name>UPPS_SALPA</name>
<keyword id="KW-0133">Cell shape</keyword>
<keyword id="KW-0961">Cell wall biogenesis/degradation</keyword>
<keyword id="KW-0460">Magnesium</keyword>
<keyword id="KW-0479">Metal-binding</keyword>
<keyword id="KW-0573">Peptidoglycan synthesis</keyword>
<keyword id="KW-0808">Transferase</keyword>
<accession>Q5PD68</accession>
<dbReference type="EC" id="2.5.1.31" evidence="1"/>
<dbReference type="EMBL" id="CP000026">
    <property type="protein sequence ID" value="AAV76257.1"/>
    <property type="molecule type" value="Genomic_DNA"/>
</dbReference>
<dbReference type="RefSeq" id="WP_000947413.1">
    <property type="nucleotide sequence ID" value="NC_006511.1"/>
</dbReference>
<dbReference type="SMR" id="Q5PD68"/>
<dbReference type="KEGG" id="spt:SPA0228"/>
<dbReference type="HOGENOM" id="CLU_038505_1_1_6"/>
<dbReference type="Proteomes" id="UP000008185">
    <property type="component" value="Chromosome"/>
</dbReference>
<dbReference type="GO" id="GO:0005829">
    <property type="term" value="C:cytosol"/>
    <property type="evidence" value="ECO:0007669"/>
    <property type="project" value="TreeGrafter"/>
</dbReference>
<dbReference type="GO" id="GO:0008834">
    <property type="term" value="F:ditrans,polycis-undecaprenyl-diphosphate synthase [(2E,6E)-farnesyl-diphosphate specific] activity"/>
    <property type="evidence" value="ECO:0007669"/>
    <property type="project" value="UniProtKB-UniRule"/>
</dbReference>
<dbReference type="GO" id="GO:0000287">
    <property type="term" value="F:magnesium ion binding"/>
    <property type="evidence" value="ECO:0007669"/>
    <property type="project" value="UniProtKB-UniRule"/>
</dbReference>
<dbReference type="GO" id="GO:0071555">
    <property type="term" value="P:cell wall organization"/>
    <property type="evidence" value="ECO:0007669"/>
    <property type="project" value="UniProtKB-KW"/>
</dbReference>
<dbReference type="GO" id="GO:0009252">
    <property type="term" value="P:peptidoglycan biosynthetic process"/>
    <property type="evidence" value="ECO:0007669"/>
    <property type="project" value="UniProtKB-UniRule"/>
</dbReference>
<dbReference type="GO" id="GO:0016094">
    <property type="term" value="P:polyprenol biosynthetic process"/>
    <property type="evidence" value="ECO:0007669"/>
    <property type="project" value="TreeGrafter"/>
</dbReference>
<dbReference type="GO" id="GO:0008360">
    <property type="term" value="P:regulation of cell shape"/>
    <property type="evidence" value="ECO:0007669"/>
    <property type="project" value="UniProtKB-KW"/>
</dbReference>
<dbReference type="CDD" id="cd00475">
    <property type="entry name" value="Cis_IPPS"/>
    <property type="match status" value="1"/>
</dbReference>
<dbReference type="FunFam" id="3.40.1180.10:FF:000001">
    <property type="entry name" value="(2E,6E)-farnesyl-diphosphate-specific ditrans,polycis-undecaprenyl-diphosphate synthase"/>
    <property type="match status" value="1"/>
</dbReference>
<dbReference type="Gene3D" id="3.40.1180.10">
    <property type="entry name" value="Decaprenyl diphosphate synthase-like"/>
    <property type="match status" value="1"/>
</dbReference>
<dbReference type="HAMAP" id="MF_01139">
    <property type="entry name" value="ISPT"/>
    <property type="match status" value="1"/>
</dbReference>
<dbReference type="InterPro" id="IPR001441">
    <property type="entry name" value="UPP_synth-like"/>
</dbReference>
<dbReference type="InterPro" id="IPR018520">
    <property type="entry name" value="UPP_synth-like_CS"/>
</dbReference>
<dbReference type="InterPro" id="IPR036424">
    <property type="entry name" value="UPP_synth-like_sf"/>
</dbReference>
<dbReference type="NCBIfam" id="NF007596">
    <property type="entry name" value="PRK10240.1"/>
    <property type="match status" value="1"/>
</dbReference>
<dbReference type="NCBIfam" id="TIGR00055">
    <property type="entry name" value="uppS"/>
    <property type="match status" value="1"/>
</dbReference>
<dbReference type="PANTHER" id="PTHR10291:SF0">
    <property type="entry name" value="DEHYDRODOLICHYL DIPHOSPHATE SYNTHASE 2"/>
    <property type="match status" value="1"/>
</dbReference>
<dbReference type="PANTHER" id="PTHR10291">
    <property type="entry name" value="DEHYDRODOLICHYL DIPHOSPHATE SYNTHASE FAMILY MEMBER"/>
    <property type="match status" value="1"/>
</dbReference>
<dbReference type="Pfam" id="PF01255">
    <property type="entry name" value="Prenyltransf"/>
    <property type="match status" value="1"/>
</dbReference>
<dbReference type="SUPFAM" id="SSF64005">
    <property type="entry name" value="Undecaprenyl diphosphate synthase"/>
    <property type="match status" value="1"/>
</dbReference>
<dbReference type="PROSITE" id="PS01066">
    <property type="entry name" value="UPP_SYNTHASE"/>
    <property type="match status" value="1"/>
</dbReference>
<protein>
    <recommendedName>
        <fullName evidence="1">Ditrans,polycis-undecaprenyl-diphosphate synthase ((2E,6E)-farnesyl-diphosphate specific)</fullName>
        <ecNumber evidence="1">2.5.1.31</ecNumber>
    </recommendedName>
    <alternativeName>
        <fullName evidence="1">Ditrans,polycis-undecaprenylcistransferase</fullName>
    </alternativeName>
    <alternativeName>
        <fullName evidence="1">Undecaprenyl diphosphate synthase</fullName>
        <shortName evidence="1">UDS</shortName>
    </alternativeName>
    <alternativeName>
        <fullName evidence="1">Undecaprenyl pyrophosphate synthase</fullName>
        <shortName evidence="1">UPP synthase</shortName>
    </alternativeName>
</protein>
<comment type="function">
    <text evidence="1">Catalyzes the sequential condensation of isopentenyl diphosphate (IPP) with (2E,6E)-farnesyl diphosphate (E,E-FPP) to yield (2Z,6Z,10Z,14Z,18Z,22Z,26Z,30Z,34E,38E)-undecaprenyl diphosphate (di-trans,octa-cis-UPP). UPP is the precursor of glycosyl carrier lipid in the biosynthesis of bacterial cell wall polysaccharide components such as peptidoglycan and lipopolysaccharide.</text>
</comment>
<comment type="catalytic activity">
    <reaction evidence="1">
        <text>8 isopentenyl diphosphate + (2E,6E)-farnesyl diphosphate = di-trans,octa-cis-undecaprenyl diphosphate + 8 diphosphate</text>
        <dbReference type="Rhea" id="RHEA:27551"/>
        <dbReference type="ChEBI" id="CHEBI:33019"/>
        <dbReference type="ChEBI" id="CHEBI:58405"/>
        <dbReference type="ChEBI" id="CHEBI:128769"/>
        <dbReference type="ChEBI" id="CHEBI:175763"/>
        <dbReference type="EC" id="2.5.1.31"/>
    </reaction>
</comment>
<comment type="cofactor">
    <cofactor evidence="1">
        <name>Mg(2+)</name>
        <dbReference type="ChEBI" id="CHEBI:18420"/>
    </cofactor>
    <text evidence="1">Binds 2 magnesium ions per subunit.</text>
</comment>
<comment type="subunit">
    <text evidence="1">Homodimer.</text>
</comment>
<comment type="similarity">
    <text evidence="1">Belongs to the UPP synthase family.</text>
</comment>
<proteinExistence type="inferred from homology"/>
<sequence length="252" mass="28328">MLSATQPVSENLPAHGCRHVAIIMDGNGRWAKKQGKIRAFGHKAGAKSVRRAVSFAANNGIDALTLYAFSSENWNRPAQEVSALMELFVWALDSEVKSLHRHNVRLRIIGDISRFNSRLQERIRKSEALTAHNTGLTLNIAANYGGRWDIVQGVRQLAEQVQAGVLRPDQIDEERLGQQICMHELAPVDLVIRTGGEHRISNFLLWQIAYAELYFTDVLWPDFDEQDFEGALHAFANRERRFGGTEPGDDKA</sequence>
<organism>
    <name type="scientific">Salmonella paratyphi A (strain ATCC 9150 / SARB42)</name>
    <dbReference type="NCBI Taxonomy" id="295319"/>
    <lineage>
        <taxon>Bacteria</taxon>
        <taxon>Pseudomonadati</taxon>
        <taxon>Pseudomonadota</taxon>
        <taxon>Gammaproteobacteria</taxon>
        <taxon>Enterobacterales</taxon>
        <taxon>Enterobacteriaceae</taxon>
        <taxon>Salmonella</taxon>
    </lineage>
</organism>